<organism>
    <name type="scientific">Streptomyces halstedii</name>
    <dbReference type="NCBI Taxonomy" id="1944"/>
    <lineage>
        <taxon>Bacteria</taxon>
        <taxon>Bacillati</taxon>
        <taxon>Actinomycetota</taxon>
        <taxon>Actinomycetes</taxon>
        <taxon>Kitasatosporales</taxon>
        <taxon>Streptomycetaceae</taxon>
        <taxon>Streptomyces</taxon>
    </lineage>
</organism>
<protein>
    <recommendedName>
        <fullName>Putative polyketide cyclase</fullName>
    </recommendedName>
</protein>
<feature type="chain" id="PRO_0000079758" description="Putative polyketide cyclase">
    <location>
        <begin position="1"/>
        <end position="109" status="greater than"/>
    </location>
</feature>
<feature type="non-terminal residue">
    <location>
        <position position="109"/>
    </location>
</feature>
<sequence>MAGHTENEIVIAAPLDLVWDMTNDVENWPRLFSEYASAEILEREGDRVRFRLTMHPDDEGRVWSWVSERVADRASLTVRAHRVETGPFQFMDIQWVYEQTPEGVLMRWI</sequence>
<name>CYPC_STRHA</name>
<gene>
    <name type="primary">sch4</name>
</gene>
<accession>Q05368</accession>
<evidence type="ECO:0000305" key="1"/>
<dbReference type="EMBL" id="L05390">
    <property type="protein sequence ID" value="AAA02836.2"/>
    <property type="molecule type" value="Genomic_DNA"/>
</dbReference>
<dbReference type="PIR" id="PN0640">
    <property type="entry name" value="PN0640"/>
</dbReference>
<dbReference type="SMR" id="Q05368"/>
<dbReference type="Gene3D" id="3.30.530.20">
    <property type="match status" value="1"/>
</dbReference>
<dbReference type="InterPro" id="IPR005031">
    <property type="entry name" value="COQ10_START"/>
</dbReference>
<dbReference type="InterPro" id="IPR023393">
    <property type="entry name" value="START-like_dom_sf"/>
</dbReference>
<dbReference type="Pfam" id="PF03364">
    <property type="entry name" value="Polyketide_cyc"/>
    <property type="match status" value="1"/>
</dbReference>
<dbReference type="SUPFAM" id="SSF55961">
    <property type="entry name" value="Bet v1-like"/>
    <property type="match status" value="1"/>
</dbReference>
<comment type="function">
    <text>Involved in developmentally regulated synthesis of a compound biosynthetically related to polyketide antibiotics which is essential for spore color in Streptomyces halstedii.</text>
</comment>
<comment type="similarity">
    <text evidence="1">To polyketide cyclases.</text>
</comment>
<proteinExistence type="predicted"/>
<reference key="1">
    <citation type="journal article" date="1993" name="Gene">
        <title>Hybridization and DNA sequence analyses suggest an early evolutionary divergence of related biosynthetic gene sets encoding polyketide antibiotics and spore pigments in Streptomyces spp.</title>
        <authorList>
            <person name="Blanco G."/>
            <person name="Brian P."/>
            <person name="Pereda A."/>
            <person name="Mendez C."/>
            <person name="Salas J.A."/>
            <person name="Chater K.F."/>
        </authorList>
    </citation>
    <scope>NUCLEOTIDE SEQUENCE [GENOMIC DNA]</scope>
    <source>
        <strain>NRRL 2381</strain>
    </source>
</reference>